<organism>
    <name type="scientific">Salmonella paratyphi A (strain AKU_12601)</name>
    <dbReference type="NCBI Taxonomy" id="554290"/>
    <lineage>
        <taxon>Bacteria</taxon>
        <taxon>Pseudomonadati</taxon>
        <taxon>Pseudomonadota</taxon>
        <taxon>Gammaproteobacteria</taxon>
        <taxon>Enterobacterales</taxon>
        <taxon>Enterobacteriaceae</taxon>
        <taxon>Salmonella</taxon>
    </lineage>
</organism>
<name>CUTC_SALPK</name>
<protein>
    <recommendedName>
        <fullName evidence="1">PF03932 family protein CutC</fullName>
    </recommendedName>
</protein>
<sequence>MALLEICCYSMECALTAQRNGADRIELCAAPKEGGLTPSFGILRSVREHITIPVHPIIRPRGGDFYYTDGEFAAMLEDIRLVRELGFPGLVTGVLTVDGDVDMSRMEKIMTAAGPLAVTFHRAFDMCANPFNALKNLADAGVARVLTSGQKADAAQGLSIIMELIAQGDAPIIMAGAGVRANNLQNFLDAGVREVHSSAGVLLPSPMRYRNQGLSMSADIQADEYSRYRVEGAAVAEMKGIIVRHQAK</sequence>
<comment type="subunit">
    <text evidence="1">Homodimer.</text>
</comment>
<comment type="subcellular location">
    <subcellularLocation>
        <location evidence="1">Cytoplasm</location>
    </subcellularLocation>
</comment>
<comment type="similarity">
    <text evidence="1">Belongs to the CutC family.</text>
</comment>
<comment type="caution">
    <text evidence="1">Once thought to be involved in copper homeostasis, experiments in E.coli have shown this is not the case.</text>
</comment>
<proteinExistence type="inferred from homology"/>
<accession>B5BH48</accession>
<keyword id="KW-0963">Cytoplasm</keyword>
<dbReference type="EMBL" id="FM200053">
    <property type="protein sequence ID" value="CAR59040.1"/>
    <property type="molecule type" value="Genomic_DNA"/>
</dbReference>
<dbReference type="RefSeq" id="WP_001185762.1">
    <property type="nucleotide sequence ID" value="NC_011147.1"/>
</dbReference>
<dbReference type="SMR" id="B5BH48"/>
<dbReference type="KEGG" id="sek:SSPA0896"/>
<dbReference type="HOGENOM" id="CLU_050555_3_2_6"/>
<dbReference type="Proteomes" id="UP000001869">
    <property type="component" value="Chromosome"/>
</dbReference>
<dbReference type="GO" id="GO:0005737">
    <property type="term" value="C:cytoplasm"/>
    <property type="evidence" value="ECO:0007669"/>
    <property type="project" value="UniProtKB-SubCell"/>
</dbReference>
<dbReference type="GO" id="GO:0005507">
    <property type="term" value="F:copper ion binding"/>
    <property type="evidence" value="ECO:0007669"/>
    <property type="project" value="TreeGrafter"/>
</dbReference>
<dbReference type="FunFam" id="3.20.20.380:FF:000001">
    <property type="entry name" value="Copper homeostasis protein CutC"/>
    <property type="match status" value="1"/>
</dbReference>
<dbReference type="Gene3D" id="3.20.20.380">
    <property type="entry name" value="Copper homeostasis (CutC) domain"/>
    <property type="match status" value="1"/>
</dbReference>
<dbReference type="HAMAP" id="MF_00795">
    <property type="entry name" value="CutC"/>
    <property type="match status" value="1"/>
</dbReference>
<dbReference type="InterPro" id="IPR005627">
    <property type="entry name" value="CutC-like"/>
</dbReference>
<dbReference type="InterPro" id="IPR036822">
    <property type="entry name" value="CutC-like_dom_sf"/>
</dbReference>
<dbReference type="NCBIfam" id="NF008603">
    <property type="entry name" value="PRK11572.1"/>
    <property type="match status" value="1"/>
</dbReference>
<dbReference type="PANTHER" id="PTHR12598">
    <property type="entry name" value="COPPER HOMEOSTASIS PROTEIN CUTC"/>
    <property type="match status" value="1"/>
</dbReference>
<dbReference type="PANTHER" id="PTHR12598:SF0">
    <property type="entry name" value="COPPER HOMEOSTASIS PROTEIN CUTC HOMOLOG"/>
    <property type="match status" value="1"/>
</dbReference>
<dbReference type="Pfam" id="PF03932">
    <property type="entry name" value="CutC"/>
    <property type="match status" value="1"/>
</dbReference>
<dbReference type="SUPFAM" id="SSF110395">
    <property type="entry name" value="CutC-like"/>
    <property type="match status" value="1"/>
</dbReference>
<feature type="chain" id="PRO_1000133848" description="PF03932 family protein CutC">
    <location>
        <begin position="1"/>
        <end position="248"/>
    </location>
</feature>
<evidence type="ECO:0000255" key="1">
    <source>
        <dbReference type="HAMAP-Rule" id="MF_00795"/>
    </source>
</evidence>
<reference key="1">
    <citation type="journal article" date="2009" name="BMC Genomics">
        <title>Pseudogene accumulation in the evolutionary histories of Salmonella enterica serovars Paratyphi A and Typhi.</title>
        <authorList>
            <person name="Holt K.E."/>
            <person name="Thomson N.R."/>
            <person name="Wain J."/>
            <person name="Langridge G.C."/>
            <person name="Hasan R."/>
            <person name="Bhutta Z.A."/>
            <person name="Quail M.A."/>
            <person name="Norbertczak H."/>
            <person name="Walker D."/>
            <person name="Simmonds M."/>
            <person name="White B."/>
            <person name="Bason N."/>
            <person name="Mungall K."/>
            <person name="Dougan G."/>
            <person name="Parkhill J."/>
        </authorList>
    </citation>
    <scope>NUCLEOTIDE SEQUENCE [LARGE SCALE GENOMIC DNA]</scope>
    <source>
        <strain>AKU_12601</strain>
    </source>
</reference>
<gene>
    <name evidence="1" type="primary">cutC</name>
    <name type="ordered locus">SSPA0896</name>
</gene>